<accession>D3ZSP7</accession>
<sequence>MPGHRGAPHLPPWVCGLCSMDDFAEGGLSLADDILLEDYPYEDDCICTPDFTTDDYVRVTQLYYEGVGMQYKDYAQSEKNLEYDICNIWCSKPLSILQDYCDAIKLYIFWPLLFQHQHSSIISRLHPCVEAIRSRAAEISLKKLQHLELMEDIVDLAKKVANDSFLIEGLLKIGYKIENKILAMEDALNWIKYTGDVTILPKLGSVDSGWPMLSIFFTEYKYHITRVVTENCNLLEEFRRHSCMQCVKQGELMKMRGNEEFAKEKFEIAVIYYTRAIEYRPENHLLYGNRALCFLRMGQFRNALSDGKRAIVLKNTWPKGHYRYCDALSMLGEYDWALQANIKAQKLCKNDPEGIKDLIQQHIKLQKQIEDLQGRTSNRNPIKAFYESRAYIPRNSSAPAFRTSLNFVETERGFRKTKYRMANGGGHQNQKVADEALKGDDCDCHPEFLPPPSQPPRHKGKQKSRNNESEKPSSNSQVTLQVDLKSILEKQFSKSSRAAHQDFANIMKMLRSLIQDGYTALLEQRCRSAAQAFTELLNGLDPQKIKQLNLAMINYVLVVYGLAVSLLGIGRPEELSEAENQFKRIIEHYPNEGLDCLAYCGIGKVYLKKNRFLEALNHFEKAKTLICRLPGILTWPTSNVIIEESKPEKVKVMLEKFVEECKFPPVPDAVCCYQKCRGFSKIQIYLTDPDFKGFIRISCCQYCKVEFHMNCWKKLKTTTFNDKIDKDFLQGICLTPDCEGIISKIIIFSSGGQVKCEFEHKVVKEKAPSRPVLKQKCSSLEKLRLKEDKKLKRKIQKQEAKKLAQERMEEDLRESNPPKPEEPEETVESAQSCQFLDDRILQCIKQNADKIKSVVLNTSTLLKELLSWKVLSTEDYTTCFSSKNFVHEAVDYVIGHLIQEKNRVKTRIFLHVLSELKELDPKLAPWIQRLNSFGLDATGPFFTRYGASLKELDFNIVTFLWSEKYGHKLGSIEGKQLDYFCEPASVMEARCLIWLLEEHRDKFPALHSALDEFFDIMDSRCTVLRKQDSDEMPFGCIKVKNKGKKKKPKDSKPMLVGSGTASVTPSSETVTPEDHNRRNSDSAGPFAVPDHLRQDVEEFEALYDQHSSEYVVRNKKLWDINPKQKCSTLYDYFSQLLEEHGPLDMSDRMFSEEYEFFPEETRQILEKAGGLKSFLLGCPRFVVIDNCIALKKVASRLKKKRKKKNIKTKVEEISKTGEYLRVKLPLNPTAREFQPDVKSEAAAEDVTSIPGPADSSAPAAEDLKPQLDSDSSSGSASEDSRLEVVSPDLPTPLCEDASPSPTPAPEDAKPTYWTQSHLVTGFCTYLPFQGFGIAQSRPAYINMVPSLSQFTSIYTPLANISSEYPMPRSMPVVPSFVASERADGNAAAYFESHRLNTENASDDHTASETQILEGPLGMCVKSQSSTADARTALSEPEGNSRHSGSSDSLWEASLENVSGITDVPPAPSVAIQVSRSLIHQEVNTEPYAPFERQQGDLSQKEKECHLLREQLQVACEECEQMELRSSQETRDLEEKLQRHAEENKVSLPELQWALGKLDREIKKWHQEKKEIQERLKALKKKIKKVINTSDMSAQKNDGLDKECESQPDQSLGISSALTDEKAKVEESVRKGKELYEESQQRAVAAEVSVLENWKEREVCKLQGVATQAEACLKSLKLMNSDSAAYPDVECDILSWETFLSTVTEEIENTKCQFEEQIKAIKSGSRLSDLSSVQVSELLFPACSMIHPQLLSESSRHEDHGLVACVDSMTGAVLNDPYVGPDSGCSEEVPELSLGSPTHHPEGAQQLEVKKASQVSPSEQNPEADEKPSGQATRSSQSQKNPFNSIIEHLSVIFPCYASSELSGFIKKVRNKSKNSFSGLSIEEIVERVTEHIVEEQKKKKPNPGKDKKTSEAHPAASVSKSSPSPPLAAAGPSAKTKGQKKDDVPAPDGNSCQICHEIFKSKNMRVLKCGHKFHKGCFKQWLKGQSTCPTCGSSDLLSEE</sequence>
<protein>
    <recommendedName>
        <fullName evidence="2">E3 ubiquitin-protein ligase TTC3</fullName>
        <ecNumber evidence="2">2.3.2.27</ecNumber>
    </recommendedName>
    <alternativeName>
        <fullName evidence="8">RING-type E3 ubiquitin transferase TTC3</fullName>
    </alternativeName>
    <alternativeName>
        <fullName evidence="2">TPR repeat protein D</fullName>
    </alternativeName>
</protein>
<reference evidence="9" key="1">
    <citation type="journal article" date="2004" name="Nature">
        <title>Genome sequence of the Brown Norway rat yields insights into mammalian evolution.</title>
        <authorList>
            <person name="Gibbs R.A."/>
            <person name="Weinstock G.M."/>
            <person name="Metzker M.L."/>
            <person name="Muzny D.M."/>
            <person name="Sodergren E.J."/>
            <person name="Scherer S."/>
            <person name="Scott G."/>
            <person name="Steffen D."/>
            <person name="Worley K.C."/>
            <person name="Burch P.E."/>
            <person name="Okwuonu G."/>
            <person name="Hines S."/>
            <person name="Lewis L."/>
            <person name="Deramo C."/>
            <person name="Delgado O."/>
            <person name="Dugan-Rocha S."/>
            <person name="Miner G."/>
            <person name="Morgan M."/>
            <person name="Hawes A."/>
            <person name="Gill R."/>
            <person name="Holt R.A."/>
            <person name="Adams M.D."/>
            <person name="Amanatides P.G."/>
            <person name="Baden-Tillson H."/>
            <person name="Barnstead M."/>
            <person name="Chin S."/>
            <person name="Evans C.A."/>
            <person name="Ferriera S."/>
            <person name="Fosler C."/>
            <person name="Glodek A."/>
            <person name="Gu Z."/>
            <person name="Jennings D."/>
            <person name="Kraft C.L."/>
            <person name="Nguyen T."/>
            <person name="Pfannkoch C.M."/>
            <person name="Sitter C."/>
            <person name="Sutton G.G."/>
            <person name="Venter J.C."/>
            <person name="Woodage T."/>
            <person name="Smith D."/>
            <person name="Lee H.-M."/>
            <person name="Gustafson E."/>
            <person name="Cahill P."/>
            <person name="Kana A."/>
            <person name="Doucette-Stamm L."/>
            <person name="Weinstock K."/>
            <person name="Fechtel K."/>
            <person name="Weiss R.B."/>
            <person name="Dunn D.M."/>
            <person name="Green E.D."/>
            <person name="Blakesley R.W."/>
            <person name="Bouffard G.G."/>
            <person name="De Jong P.J."/>
            <person name="Osoegawa K."/>
            <person name="Zhu B."/>
            <person name="Marra M."/>
            <person name="Schein J."/>
            <person name="Bosdet I."/>
            <person name="Fjell C."/>
            <person name="Jones S."/>
            <person name="Krzywinski M."/>
            <person name="Mathewson C."/>
            <person name="Siddiqui A."/>
            <person name="Wye N."/>
            <person name="McPherson J."/>
            <person name="Zhao S."/>
            <person name="Fraser C.M."/>
            <person name="Shetty J."/>
            <person name="Shatsman S."/>
            <person name="Geer K."/>
            <person name="Chen Y."/>
            <person name="Abramzon S."/>
            <person name="Nierman W.C."/>
            <person name="Havlak P.H."/>
            <person name="Chen R."/>
            <person name="Durbin K.J."/>
            <person name="Egan A."/>
            <person name="Ren Y."/>
            <person name="Song X.-Z."/>
            <person name="Li B."/>
            <person name="Liu Y."/>
            <person name="Qin X."/>
            <person name="Cawley S."/>
            <person name="Cooney A.J."/>
            <person name="D'Souza L.M."/>
            <person name="Martin K."/>
            <person name="Wu J.Q."/>
            <person name="Gonzalez-Garay M.L."/>
            <person name="Jackson A.R."/>
            <person name="Kalafus K.J."/>
            <person name="McLeod M.P."/>
            <person name="Milosavljevic A."/>
            <person name="Virk D."/>
            <person name="Volkov A."/>
            <person name="Wheeler D.A."/>
            <person name="Zhang Z."/>
            <person name="Bailey J.A."/>
            <person name="Eichler E.E."/>
            <person name="Tuzun E."/>
            <person name="Birney E."/>
            <person name="Mongin E."/>
            <person name="Ureta-Vidal A."/>
            <person name="Woodwark C."/>
            <person name="Zdobnov E."/>
            <person name="Bork P."/>
            <person name="Suyama M."/>
            <person name="Torrents D."/>
            <person name="Alexandersson M."/>
            <person name="Trask B.J."/>
            <person name="Young J.M."/>
            <person name="Huang H."/>
            <person name="Wang H."/>
            <person name="Xing H."/>
            <person name="Daniels S."/>
            <person name="Gietzen D."/>
            <person name="Schmidt J."/>
            <person name="Stevens K."/>
            <person name="Vitt U."/>
            <person name="Wingrove J."/>
            <person name="Camara F."/>
            <person name="Mar Alba M."/>
            <person name="Abril J.F."/>
            <person name="Guigo R."/>
            <person name="Smit A."/>
            <person name="Dubchak I."/>
            <person name="Rubin E.M."/>
            <person name="Couronne O."/>
            <person name="Poliakov A."/>
            <person name="Huebner N."/>
            <person name="Ganten D."/>
            <person name="Goesele C."/>
            <person name="Hummel O."/>
            <person name="Kreitler T."/>
            <person name="Lee Y.-A."/>
            <person name="Monti J."/>
            <person name="Schulz H."/>
            <person name="Zimdahl H."/>
            <person name="Himmelbauer H."/>
            <person name="Lehrach H."/>
            <person name="Jacob H.J."/>
            <person name="Bromberg S."/>
            <person name="Gullings-Handley J."/>
            <person name="Jensen-Seaman M.I."/>
            <person name="Kwitek A.E."/>
            <person name="Lazar J."/>
            <person name="Pasko D."/>
            <person name="Tonellato P.J."/>
            <person name="Twigger S."/>
            <person name="Ponting C.P."/>
            <person name="Duarte J.M."/>
            <person name="Rice S."/>
            <person name="Goodstadt L."/>
            <person name="Beatson S.A."/>
            <person name="Emes R.D."/>
            <person name="Winter E.E."/>
            <person name="Webber C."/>
            <person name="Brandt P."/>
            <person name="Nyakatura G."/>
            <person name="Adetobi M."/>
            <person name="Chiaromonte F."/>
            <person name="Elnitski L."/>
            <person name="Eswara P."/>
            <person name="Hardison R.C."/>
            <person name="Hou M."/>
            <person name="Kolbe D."/>
            <person name="Makova K."/>
            <person name="Miller W."/>
            <person name="Nekrutenko A."/>
            <person name="Riemer C."/>
            <person name="Schwartz S."/>
            <person name="Taylor J."/>
            <person name="Yang S."/>
            <person name="Zhang Y."/>
            <person name="Lindpaintner K."/>
            <person name="Andrews T.D."/>
            <person name="Caccamo M."/>
            <person name="Clamp M."/>
            <person name="Clarke L."/>
            <person name="Curwen V."/>
            <person name="Durbin R.M."/>
            <person name="Eyras E."/>
            <person name="Searle S.M."/>
            <person name="Cooper G.M."/>
            <person name="Batzoglou S."/>
            <person name="Brudno M."/>
            <person name="Sidow A."/>
            <person name="Stone E.A."/>
            <person name="Payseur B.A."/>
            <person name="Bourque G."/>
            <person name="Lopez-Otin C."/>
            <person name="Puente X.S."/>
            <person name="Chakrabarti K."/>
            <person name="Chatterji S."/>
            <person name="Dewey C."/>
            <person name="Pachter L."/>
            <person name="Bray N."/>
            <person name="Yap V.B."/>
            <person name="Caspi A."/>
            <person name="Tesler G."/>
            <person name="Pevzner P.A."/>
            <person name="Haussler D."/>
            <person name="Roskin K.M."/>
            <person name="Baertsch R."/>
            <person name="Clawson H."/>
            <person name="Furey T.S."/>
            <person name="Hinrichs A.S."/>
            <person name="Karolchik D."/>
            <person name="Kent W.J."/>
            <person name="Rosenbloom K.R."/>
            <person name="Trumbower H."/>
            <person name="Weirauch M."/>
            <person name="Cooper D.N."/>
            <person name="Stenson P.D."/>
            <person name="Ma B."/>
            <person name="Brent M."/>
            <person name="Arumugam M."/>
            <person name="Shteynberg D."/>
            <person name="Copley R.R."/>
            <person name="Taylor M.S."/>
            <person name="Riethman H."/>
            <person name="Mudunuri U."/>
            <person name="Peterson J."/>
            <person name="Guyer M."/>
            <person name="Felsenfeld A."/>
            <person name="Old S."/>
            <person name="Mockrin S."/>
            <person name="Collins F.S."/>
        </authorList>
    </citation>
    <scope>NUCLEOTIDE SEQUENCE [LARGE SCALE GENOMIC DNA]</scope>
    <source>
        <strain>Brown Norway</strain>
    </source>
</reference>
<reference evidence="8" key="2">
    <citation type="journal article" date="2014" name="PLoS ONE">
        <title>The DCR protein TTC3 affects differentiation and Golgi compactness in neurons through specific actin-regulating pathways.</title>
        <authorList>
            <person name="Berto G.E."/>
            <person name="Iobbi C."/>
            <person name="Camera P."/>
            <person name="Scarpa E."/>
            <person name="Iampietro C."/>
            <person name="Bianchi F."/>
            <person name="Gai M."/>
            <person name="Sgro F."/>
            <person name="Cristofani F."/>
            <person name="Gaertner A."/>
            <person name="Dotti C.G."/>
            <person name="Di Cunto F."/>
        </authorList>
    </citation>
    <scope>FUNCTION</scope>
    <scope>SUBCELLULAR LOCATION</scope>
</reference>
<evidence type="ECO:0000250" key="1">
    <source>
        <dbReference type="UniProtKB" id="O88196"/>
    </source>
</evidence>
<evidence type="ECO:0000250" key="2">
    <source>
        <dbReference type="UniProtKB" id="P53804"/>
    </source>
</evidence>
<evidence type="ECO:0000255" key="3"/>
<evidence type="ECO:0000255" key="4">
    <source>
        <dbReference type="PROSITE-ProRule" id="PRU00175"/>
    </source>
</evidence>
<evidence type="ECO:0000255" key="5">
    <source>
        <dbReference type="PROSITE-ProRule" id="PRU00339"/>
    </source>
</evidence>
<evidence type="ECO:0000256" key="6">
    <source>
        <dbReference type="SAM" id="MobiDB-lite"/>
    </source>
</evidence>
<evidence type="ECO:0000269" key="7">
    <source>
    </source>
</evidence>
<evidence type="ECO:0000305" key="8"/>
<evidence type="ECO:0000312" key="9">
    <source>
        <dbReference type="Proteomes" id="UP000002494"/>
    </source>
</evidence>
<evidence type="ECO:0000312" key="10">
    <source>
        <dbReference type="RGD" id="1308654"/>
    </source>
</evidence>
<dbReference type="EC" id="2.3.2.27" evidence="2"/>
<dbReference type="EMBL" id="AABR07033674">
    <property type="status" value="NOT_ANNOTATED_CDS"/>
    <property type="molecule type" value="Genomic_DNA"/>
</dbReference>
<dbReference type="EMBL" id="AABR07033675">
    <property type="status" value="NOT_ANNOTATED_CDS"/>
    <property type="molecule type" value="Genomic_DNA"/>
</dbReference>
<dbReference type="EMBL" id="AABR07033676">
    <property type="status" value="NOT_ANNOTATED_CDS"/>
    <property type="molecule type" value="Genomic_DNA"/>
</dbReference>
<dbReference type="SMR" id="D3ZSP7"/>
<dbReference type="FunCoup" id="D3ZSP7">
    <property type="interactions" value="1547"/>
</dbReference>
<dbReference type="STRING" id="10116.ENSRNOP00000059742"/>
<dbReference type="GlyGen" id="D3ZSP7">
    <property type="glycosylation" value="2 sites"/>
</dbReference>
<dbReference type="PhosphoSitePlus" id="D3ZSP7"/>
<dbReference type="jPOST" id="D3ZSP7"/>
<dbReference type="PaxDb" id="10116-ENSRNOP00000059742"/>
<dbReference type="PeptideAtlas" id="D3ZSP7"/>
<dbReference type="AGR" id="RGD:1308654"/>
<dbReference type="RGD" id="1308654">
    <property type="gene designation" value="Ttc3"/>
</dbReference>
<dbReference type="VEuPathDB" id="HostDB:ENSRNOG00000001682"/>
<dbReference type="eggNOG" id="KOG0800">
    <property type="taxonomic scope" value="Eukaryota"/>
</dbReference>
<dbReference type="HOGENOM" id="CLU_001829_1_0_1"/>
<dbReference type="InParanoid" id="D3ZSP7"/>
<dbReference type="UniPathway" id="UPA00143"/>
<dbReference type="PRO" id="PR:D3ZSP7"/>
<dbReference type="Proteomes" id="UP000002494">
    <property type="component" value="Chromosome 11"/>
</dbReference>
<dbReference type="Bgee" id="ENSRNOG00000001682">
    <property type="expression patterns" value="Expressed in Ammon's horn and 19 other cell types or tissues"/>
</dbReference>
<dbReference type="GO" id="GO:0005794">
    <property type="term" value="C:Golgi apparatus"/>
    <property type="evidence" value="ECO:0007669"/>
    <property type="project" value="UniProtKB-SubCell"/>
</dbReference>
<dbReference type="GO" id="GO:0005634">
    <property type="term" value="C:nucleus"/>
    <property type="evidence" value="ECO:0000266"/>
    <property type="project" value="RGD"/>
</dbReference>
<dbReference type="GO" id="GO:0005773">
    <property type="term" value="C:vacuole"/>
    <property type="evidence" value="ECO:0000266"/>
    <property type="project" value="RGD"/>
</dbReference>
<dbReference type="GO" id="GO:0004842">
    <property type="term" value="F:ubiquitin-protein transferase activity"/>
    <property type="evidence" value="ECO:0000266"/>
    <property type="project" value="RGD"/>
</dbReference>
<dbReference type="GO" id="GO:0008270">
    <property type="term" value="F:zinc ion binding"/>
    <property type="evidence" value="ECO:0007669"/>
    <property type="project" value="UniProtKB-KW"/>
</dbReference>
<dbReference type="GO" id="GO:0030517">
    <property type="term" value="P:negative regulation of axon extension"/>
    <property type="evidence" value="ECO:0000266"/>
    <property type="project" value="RGD"/>
</dbReference>
<dbReference type="GO" id="GO:0045665">
    <property type="term" value="P:negative regulation of neuron differentiation"/>
    <property type="evidence" value="ECO:0000266"/>
    <property type="project" value="RGD"/>
</dbReference>
<dbReference type="GO" id="GO:0070936">
    <property type="term" value="P:protein K48-linked ubiquitination"/>
    <property type="evidence" value="ECO:0000266"/>
    <property type="project" value="RGD"/>
</dbReference>
<dbReference type="GO" id="GO:0006511">
    <property type="term" value="P:ubiquitin-dependent protein catabolic process"/>
    <property type="evidence" value="ECO:0000266"/>
    <property type="project" value="RGD"/>
</dbReference>
<dbReference type="CDD" id="cd16481">
    <property type="entry name" value="RING-H2_TTC3"/>
    <property type="match status" value="1"/>
</dbReference>
<dbReference type="FunFam" id="1.25.40.10:FF:000370">
    <property type="entry name" value="E3 ubiquitin-protein ligase TTC3"/>
    <property type="match status" value="1"/>
</dbReference>
<dbReference type="FunFam" id="1.25.40.10:FF:000143">
    <property type="entry name" value="E3 ubiquitin-protein ligase TTC3 isoform X2"/>
    <property type="match status" value="1"/>
</dbReference>
<dbReference type="FunFam" id="3.30.40.10:FF:000529">
    <property type="entry name" value="Tetratricopeptide repeat domain 3"/>
    <property type="match status" value="1"/>
</dbReference>
<dbReference type="Gene3D" id="1.10.533.10">
    <property type="entry name" value="Death Domain, Fas"/>
    <property type="match status" value="1"/>
</dbReference>
<dbReference type="Gene3D" id="1.25.40.10">
    <property type="entry name" value="Tetratricopeptide repeat domain"/>
    <property type="match status" value="2"/>
</dbReference>
<dbReference type="Gene3D" id="3.30.40.10">
    <property type="entry name" value="Zinc/RING finger domain, C3HC4 (zinc finger)"/>
    <property type="match status" value="1"/>
</dbReference>
<dbReference type="InterPro" id="IPR011029">
    <property type="entry name" value="DEATH-like_dom_sf"/>
</dbReference>
<dbReference type="InterPro" id="IPR011990">
    <property type="entry name" value="TPR-like_helical_dom_sf"/>
</dbReference>
<dbReference type="InterPro" id="IPR019734">
    <property type="entry name" value="TPR_rpt"/>
</dbReference>
<dbReference type="InterPro" id="IPR056872">
    <property type="entry name" value="TTC3/DZIP3-like_helical"/>
</dbReference>
<dbReference type="InterPro" id="IPR056870">
    <property type="entry name" value="TTC3/DZIP3/RBM44-like_helical"/>
</dbReference>
<dbReference type="InterPro" id="IPR043866">
    <property type="entry name" value="TTC3/DZIP3_dom"/>
</dbReference>
<dbReference type="InterPro" id="IPR056871">
    <property type="entry name" value="wHTH_TTC3"/>
</dbReference>
<dbReference type="InterPro" id="IPR001841">
    <property type="entry name" value="Znf_RING"/>
</dbReference>
<dbReference type="InterPro" id="IPR013083">
    <property type="entry name" value="Znf_RING/FYVE/PHD"/>
</dbReference>
<dbReference type="PANTHER" id="PTHR17550">
    <property type="entry name" value="E3 UBIQUITIN-PROTEIN LIGASE TTC3"/>
    <property type="match status" value="1"/>
</dbReference>
<dbReference type="PANTHER" id="PTHR17550:SF4">
    <property type="entry name" value="E3 UBIQUITIN-PROTEIN LIGASE TTC3"/>
    <property type="match status" value="1"/>
</dbReference>
<dbReference type="Pfam" id="PF24525">
    <property type="entry name" value="TTC3"/>
    <property type="match status" value="1"/>
</dbReference>
<dbReference type="Pfam" id="PF24905">
    <property type="entry name" value="TTC3_9th"/>
    <property type="match status" value="1"/>
</dbReference>
<dbReference type="Pfam" id="PF19179">
    <property type="entry name" value="TTC3_DZIP3_dom"/>
    <property type="match status" value="1"/>
</dbReference>
<dbReference type="Pfam" id="PF24812">
    <property type="entry name" value="wHTH_TTC3"/>
    <property type="match status" value="1"/>
</dbReference>
<dbReference type="Pfam" id="PF13639">
    <property type="entry name" value="zf-RING_2"/>
    <property type="match status" value="1"/>
</dbReference>
<dbReference type="SMART" id="SM00184">
    <property type="entry name" value="RING"/>
    <property type="match status" value="1"/>
</dbReference>
<dbReference type="SMART" id="SM00028">
    <property type="entry name" value="TPR"/>
    <property type="match status" value="4"/>
</dbReference>
<dbReference type="SUPFAM" id="SSF57850">
    <property type="entry name" value="RING/U-box"/>
    <property type="match status" value="1"/>
</dbReference>
<dbReference type="SUPFAM" id="SSF48452">
    <property type="entry name" value="TPR-like"/>
    <property type="match status" value="2"/>
</dbReference>
<dbReference type="PROSITE" id="PS50005">
    <property type="entry name" value="TPR"/>
    <property type="match status" value="2"/>
</dbReference>
<dbReference type="PROSITE" id="PS50293">
    <property type="entry name" value="TPR_REGION"/>
    <property type="match status" value="2"/>
</dbReference>
<dbReference type="PROSITE" id="PS50089">
    <property type="entry name" value="ZF_RING_2"/>
    <property type="match status" value="1"/>
</dbReference>
<proteinExistence type="inferred from homology"/>
<keyword id="KW-0963">Cytoplasm</keyword>
<keyword id="KW-0333">Golgi apparatus</keyword>
<keyword id="KW-0479">Metal-binding</keyword>
<keyword id="KW-0539">Nucleus</keyword>
<keyword id="KW-0597">Phosphoprotein</keyword>
<keyword id="KW-1185">Reference proteome</keyword>
<keyword id="KW-0677">Repeat</keyword>
<keyword id="KW-0802">TPR repeat</keyword>
<keyword id="KW-0808">Transferase</keyword>
<keyword id="KW-0862">Zinc</keyword>
<keyword id="KW-0863">Zinc-finger</keyword>
<organism evidence="9">
    <name type="scientific">Rattus norvegicus</name>
    <name type="common">Rat</name>
    <dbReference type="NCBI Taxonomy" id="10116"/>
    <lineage>
        <taxon>Eukaryota</taxon>
        <taxon>Metazoa</taxon>
        <taxon>Chordata</taxon>
        <taxon>Craniata</taxon>
        <taxon>Vertebrata</taxon>
        <taxon>Euteleostomi</taxon>
        <taxon>Mammalia</taxon>
        <taxon>Eutheria</taxon>
        <taxon>Euarchontoglires</taxon>
        <taxon>Glires</taxon>
        <taxon>Rodentia</taxon>
        <taxon>Myomorpha</taxon>
        <taxon>Muroidea</taxon>
        <taxon>Muridae</taxon>
        <taxon>Murinae</taxon>
        <taxon>Rattus</taxon>
    </lineage>
</organism>
<comment type="function">
    <text evidence="2 7">E3 ubiquitin-protein ligase which catalyzes the formation of 'Lys-48'-polyubiquitin chains (By similarity). Mediates the ubiquitination and subsequent degradation of phosphorylated Akt (AKT1, AKT2 and AKT3) in the nucleus (By similarity). Acts as a terminal regulator of Akt signaling after activation; its phosphorylation by Akt, which is a prerequisite for ubiquitin ligase activity, suggests the existence of a regulation mechanism required to control Akt levels after activation (By similarity). Positively regulates TGFB1-induced epithelial-mesenchymal transition and myofibroblast differentiation by mediating the ubiquitination and subsequent degradation of SMURF2 (By similarity). Regulates neuronal differentiation by regulating actin remodeling and Golgi organization via a signaling cascade involving RHOA, CIT and ROCK (PubMed:24695496). Inhibits cell proliferation (By similarity).</text>
</comment>
<comment type="catalytic activity">
    <reaction evidence="2">
        <text>S-ubiquitinyl-[E2 ubiquitin-conjugating enzyme]-L-cysteine + [acceptor protein]-L-lysine = [E2 ubiquitin-conjugating enzyme]-L-cysteine + N(6)-ubiquitinyl-[acceptor protein]-L-lysine.</text>
        <dbReference type="EC" id="2.3.2.27"/>
    </reaction>
</comment>
<comment type="pathway">
    <text evidence="2">Protein modification; protein ubiquitination.</text>
</comment>
<comment type="subunit">
    <text evidence="2">Interacts (when phosphorylated on Ser-397) with AKT1, AKT2 and AKT3 (when phosphorylated) (By similarity). Interacts with CIT (By similarity). Interacts with POLG (By similarity). Interacts with HSP70 (By similarity). Interacts with SMURF2 (By similarity).</text>
</comment>
<comment type="subcellular location">
    <subcellularLocation>
        <location evidence="2">Nucleus</location>
    </subcellularLocation>
    <subcellularLocation>
        <location evidence="7">Cytoplasm</location>
    </subcellularLocation>
    <subcellularLocation>
        <location evidence="7">Golgi apparatus</location>
    </subcellularLocation>
    <text evidence="2">Nuclear localization may be dependent on the proteolytic cleavage of full length protein in the cytoplasm (By similarity). This cleavage may reveal an N-terminal nuclear localization signal, allowing N-terminal fragments to enter the nucleus (By similarity).</text>
</comment>
<comment type="PTM">
    <text evidence="2">Phosphorylation on Ser-397 by Akt is required for ubiquitin ligase activity.</text>
</comment>
<comment type="PTM">
    <text evidence="2">Proteolytically cleaved into differently sized N- and C-terminal fragments.</text>
</comment>
<gene>
    <name evidence="10" type="primary">Ttc3</name>
</gene>
<name>TTC3_RAT</name>
<feature type="chain" id="PRO_0000448697" description="E3 ubiquitin-protein ligase TTC3">
    <location>
        <begin position="1"/>
        <end position="2000"/>
    </location>
</feature>
<feature type="repeat" description="TPR 1" evidence="5">
    <location>
        <begin position="250"/>
        <end position="283"/>
    </location>
</feature>
<feature type="repeat" description="TPR 2" evidence="5">
    <location>
        <begin position="284"/>
        <end position="317"/>
    </location>
</feature>
<feature type="repeat" description="TPR 3" evidence="3">
    <location>
        <begin position="556"/>
        <end position="592"/>
    </location>
</feature>
<feature type="repeat" description="TPR 4" evidence="5">
    <location>
        <begin position="596"/>
        <end position="629"/>
    </location>
</feature>
<feature type="zinc finger region" description="RING-type; atypical" evidence="4">
    <location>
        <begin position="1952"/>
        <end position="1991"/>
    </location>
</feature>
<feature type="region of interest" description="Interaction with POLG" evidence="2">
    <location>
        <begin position="20"/>
        <end position="249"/>
    </location>
</feature>
<feature type="region of interest" description="Disordered" evidence="6">
    <location>
        <begin position="442"/>
        <end position="478"/>
    </location>
</feature>
<feature type="region of interest" description="Disordered" evidence="6">
    <location>
        <begin position="804"/>
        <end position="828"/>
    </location>
</feature>
<feature type="region of interest" description="Disordered" evidence="6">
    <location>
        <begin position="1041"/>
        <end position="1087"/>
    </location>
</feature>
<feature type="region of interest" description="Disordered" evidence="6">
    <location>
        <begin position="1233"/>
        <end position="1308"/>
    </location>
</feature>
<feature type="region of interest" description="Disordered" evidence="6">
    <location>
        <begin position="1423"/>
        <end position="1448"/>
    </location>
</feature>
<feature type="region of interest" description="Disordered" evidence="6">
    <location>
        <begin position="1806"/>
        <end position="1839"/>
    </location>
</feature>
<feature type="region of interest" description="Disordered" evidence="6">
    <location>
        <begin position="1894"/>
        <end position="1947"/>
    </location>
</feature>
<feature type="compositionally biased region" description="Polar residues" evidence="6">
    <location>
        <begin position="1059"/>
        <end position="1070"/>
    </location>
</feature>
<feature type="compositionally biased region" description="Low complexity" evidence="6">
    <location>
        <begin position="1268"/>
        <end position="1277"/>
    </location>
</feature>
<feature type="compositionally biased region" description="Polar residues" evidence="6">
    <location>
        <begin position="1829"/>
        <end position="1839"/>
    </location>
</feature>
<feature type="compositionally biased region" description="Basic and acidic residues" evidence="6">
    <location>
        <begin position="1894"/>
        <end position="1911"/>
    </location>
</feature>
<feature type="compositionally biased region" description="Low complexity" evidence="6">
    <location>
        <begin position="1912"/>
        <end position="1934"/>
    </location>
</feature>
<feature type="modified residue" description="Phosphoserine" evidence="2">
    <location>
        <position position="397"/>
    </location>
</feature>
<feature type="modified residue" description="Phosphoserine" evidence="1">
    <location>
        <position position="1029"/>
    </location>
</feature>
<feature type="modified residue" description="Phosphoserine" evidence="1">
    <location>
        <position position="1080"/>
    </location>
</feature>